<protein>
    <recommendedName>
        <fullName evidence="1">Probable glycine dehydrogenase (decarboxylating) subunit 2</fullName>
        <ecNumber evidence="1">1.4.4.2</ecNumber>
    </recommendedName>
    <alternativeName>
        <fullName evidence="1">Glycine cleavage system P-protein subunit 2</fullName>
    </alternativeName>
    <alternativeName>
        <fullName evidence="1">Glycine decarboxylase subunit 2</fullName>
    </alternativeName>
    <alternativeName>
        <fullName evidence="1">Glycine dehydrogenase (aminomethyl-transferring) subunit 2</fullName>
    </alternativeName>
</protein>
<evidence type="ECO:0000255" key="1">
    <source>
        <dbReference type="HAMAP-Rule" id="MF_00713"/>
    </source>
</evidence>
<name>GCSPB_CHLTE</name>
<keyword id="KW-0560">Oxidoreductase</keyword>
<keyword id="KW-0663">Pyridoxal phosphate</keyword>
<keyword id="KW-1185">Reference proteome</keyword>
<organism>
    <name type="scientific">Chlorobaculum tepidum (strain ATCC 49652 / DSM 12025 / NBRC 103806 / TLS)</name>
    <name type="common">Chlorobium tepidum</name>
    <dbReference type="NCBI Taxonomy" id="194439"/>
    <lineage>
        <taxon>Bacteria</taxon>
        <taxon>Pseudomonadati</taxon>
        <taxon>Chlorobiota</taxon>
        <taxon>Chlorobiia</taxon>
        <taxon>Chlorobiales</taxon>
        <taxon>Chlorobiaceae</taxon>
        <taxon>Chlorobaculum</taxon>
    </lineage>
</organism>
<comment type="function">
    <text evidence="1">The glycine cleavage system catalyzes the degradation of glycine. The P protein binds the alpha-amino group of glycine through its pyridoxal phosphate cofactor; CO(2) is released and the remaining methylamine moiety is then transferred to the lipoamide cofactor of the H protein.</text>
</comment>
<comment type="catalytic activity">
    <reaction evidence="1">
        <text>N(6)-[(R)-lipoyl]-L-lysyl-[glycine-cleavage complex H protein] + glycine + H(+) = N(6)-[(R)-S(8)-aminomethyldihydrolipoyl]-L-lysyl-[glycine-cleavage complex H protein] + CO2</text>
        <dbReference type="Rhea" id="RHEA:24304"/>
        <dbReference type="Rhea" id="RHEA-COMP:10494"/>
        <dbReference type="Rhea" id="RHEA-COMP:10495"/>
        <dbReference type="ChEBI" id="CHEBI:15378"/>
        <dbReference type="ChEBI" id="CHEBI:16526"/>
        <dbReference type="ChEBI" id="CHEBI:57305"/>
        <dbReference type="ChEBI" id="CHEBI:83099"/>
        <dbReference type="ChEBI" id="CHEBI:83143"/>
        <dbReference type="EC" id="1.4.4.2"/>
    </reaction>
</comment>
<comment type="cofactor">
    <cofactor evidence="1">
        <name>pyridoxal 5'-phosphate</name>
        <dbReference type="ChEBI" id="CHEBI:597326"/>
    </cofactor>
</comment>
<comment type="subunit">
    <text evidence="1">The glycine cleavage system is composed of four proteins: P, T, L and H. In this organism, the P 'protein' is a heterodimer of two subunits.</text>
</comment>
<comment type="similarity">
    <text evidence="1">Belongs to the GcvP family. C-terminal subunit subfamily.</text>
</comment>
<accession>Q8KAN3</accession>
<feature type="chain" id="PRO_0000167003" description="Probable glycine dehydrogenase (decarboxylating) subunit 2">
    <location>
        <begin position="1"/>
        <end position="486"/>
    </location>
</feature>
<feature type="modified residue" description="N6-(pyridoxal phosphate)lysine" evidence="1">
    <location>
        <position position="269"/>
    </location>
</feature>
<gene>
    <name evidence="1" type="primary">gcvPB</name>
    <name type="synonym">gcvP2</name>
    <name type="ordered locus">CT2123</name>
</gene>
<dbReference type="EC" id="1.4.4.2" evidence="1"/>
<dbReference type="EMBL" id="AE006470">
    <property type="protein sequence ID" value="AAM73339.1"/>
    <property type="molecule type" value="Genomic_DNA"/>
</dbReference>
<dbReference type="RefSeq" id="NP_662997.1">
    <property type="nucleotide sequence ID" value="NC_002932.3"/>
</dbReference>
<dbReference type="RefSeq" id="WP_010933777.1">
    <property type="nucleotide sequence ID" value="NC_002932.3"/>
</dbReference>
<dbReference type="SMR" id="Q8KAN3"/>
<dbReference type="STRING" id="194439.CT2123"/>
<dbReference type="EnsemblBacteria" id="AAM73339">
    <property type="protein sequence ID" value="AAM73339"/>
    <property type="gene ID" value="CT2123"/>
</dbReference>
<dbReference type="KEGG" id="cte:CT2123"/>
<dbReference type="PATRIC" id="fig|194439.7.peg.1924"/>
<dbReference type="eggNOG" id="COG1003">
    <property type="taxonomic scope" value="Bacteria"/>
</dbReference>
<dbReference type="HOGENOM" id="CLU_004620_5_0_10"/>
<dbReference type="OrthoDB" id="9801272at2"/>
<dbReference type="Proteomes" id="UP000001007">
    <property type="component" value="Chromosome"/>
</dbReference>
<dbReference type="GO" id="GO:0005829">
    <property type="term" value="C:cytosol"/>
    <property type="evidence" value="ECO:0007669"/>
    <property type="project" value="TreeGrafter"/>
</dbReference>
<dbReference type="GO" id="GO:0005960">
    <property type="term" value="C:glycine cleavage complex"/>
    <property type="evidence" value="ECO:0007669"/>
    <property type="project" value="TreeGrafter"/>
</dbReference>
<dbReference type="GO" id="GO:0016594">
    <property type="term" value="F:glycine binding"/>
    <property type="evidence" value="ECO:0007669"/>
    <property type="project" value="TreeGrafter"/>
</dbReference>
<dbReference type="GO" id="GO:0004375">
    <property type="term" value="F:glycine dehydrogenase (decarboxylating) activity"/>
    <property type="evidence" value="ECO:0007669"/>
    <property type="project" value="UniProtKB-EC"/>
</dbReference>
<dbReference type="GO" id="GO:0030170">
    <property type="term" value="F:pyridoxal phosphate binding"/>
    <property type="evidence" value="ECO:0007669"/>
    <property type="project" value="TreeGrafter"/>
</dbReference>
<dbReference type="GO" id="GO:0019464">
    <property type="term" value="P:glycine decarboxylation via glycine cleavage system"/>
    <property type="evidence" value="ECO:0007669"/>
    <property type="project" value="UniProtKB-UniRule"/>
</dbReference>
<dbReference type="CDD" id="cd00613">
    <property type="entry name" value="GDC-P"/>
    <property type="match status" value="1"/>
</dbReference>
<dbReference type="FunFam" id="3.40.640.10:FF:000224">
    <property type="entry name" value="Probable glycine dehydrogenase (decarboxylating) subunit 2"/>
    <property type="match status" value="1"/>
</dbReference>
<dbReference type="FunFam" id="3.90.1150.10:FF:000014">
    <property type="entry name" value="Probable glycine dehydrogenase (decarboxylating) subunit 2"/>
    <property type="match status" value="1"/>
</dbReference>
<dbReference type="Gene3D" id="6.20.440.10">
    <property type="match status" value="1"/>
</dbReference>
<dbReference type="Gene3D" id="3.90.1150.10">
    <property type="entry name" value="Aspartate Aminotransferase, domain 1"/>
    <property type="match status" value="1"/>
</dbReference>
<dbReference type="Gene3D" id="3.40.640.10">
    <property type="entry name" value="Type I PLP-dependent aspartate aminotransferase-like (Major domain)"/>
    <property type="match status" value="1"/>
</dbReference>
<dbReference type="HAMAP" id="MF_00713">
    <property type="entry name" value="GcvPB"/>
    <property type="match status" value="1"/>
</dbReference>
<dbReference type="InterPro" id="IPR000192">
    <property type="entry name" value="Aminotrans_V_dom"/>
</dbReference>
<dbReference type="InterPro" id="IPR023012">
    <property type="entry name" value="GcvPB"/>
</dbReference>
<dbReference type="InterPro" id="IPR049316">
    <property type="entry name" value="GDC-P_C"/>
</dbReference>
<dbReference type="InterPro" id="IPR020581">
    <property type="entry name" value="GDC_P"/>
</dbReference>
<dbReference type="InterPro" id="IPR015424">
    <property type="entry name" value="PyrdxlP-dep_Trfase"/>
</dbReference>
<dbReference type="InterPro" id="IPR015421">
    <property type="entry name" value="PyrdxlP-dep_Trfase_major"/>
</dbReference>
<dbReference type="InterPro" id="IPR015422">
    <property type="entry name" value="PyrdxlP-dep_Trfase_small"/>
</dbReference>
<dbReference type="NCBIfam" id="NF003346">
    <property type="entry name" value="PRK04366.1"/>
    <property type="match status" value="1"/>
</dbReference>
<dbReference type="PANTHER" id="PTHR11773:SF1">
    <property type="entry name" value="GLYCINE DEHYDROGENASE (DECARBOXYLATING), MITOCHONDRIAL"/>
    <property type="match status" value="1"/>
</dbReference>
<dbReference type="PANTHER" id="PTHR11773">
    <property type="entry name" value="GLYCINE DEHYDROGENASE, DECARBOXYLATING"/>
    <property type="match status" value="1"/>
</dbReference>
<dbReference type="Pfam" id="PF00266">
    <property type="entry name" value="Aminotran_5"/>
    <property type="match status" value="1"/>
</dbReference>
<dbReference type="Pfam" id="PF21478">
    <property type="entry name" value="GcvP2_C"/>
    <property type="match status" value="1"/>
</dbReference>
<dbReference type="SUPFAM" id="SSF53383">
    <property type="entry name" value="PLP-dependent transferases"/>
    <property type="match status" value="1"/>
</dbReference>
<sequence>MKEQLIFDLSRSGRKGYSLSPLDIPERPADELLPSKFLRKEPAELPEMAESEVVRHFIRLSNLNYHVDKNMYPLGSCTMKYNPKINDYTCDLPGFASMHPLQPESTSQGALQLMYELAEMLKEIAGMKAVTLQPAAGAHGELTGILLIKKYHEKLGNKRHKLLVVDSAHGTNPASAALGGYECVSVKCDESGCTDMGDLRAKLDGEVAALMLTNPNTVGIFEKQIPEIEKLVHGNGSLLYMDGANMNALLGITRPGDMGFDVMHYNLHKTFSAPHGGGGPGSGPVGVSERLVEFLPVPVIEKFEKDGQTRYRLNSSKPNTIGRMMNFYGNFSVLVRAYTYIRMLGADGLRRVSENAIINANYLLQRLVEHYALPYPRPVMHEFCLSGDRQKKEHGVRTLDIAKRLLDYGYHAPTVYFPLIVSEALMIEPTETEAKETLNAFADAMIAIAEEAKSNPDLIKSAPTTTPVKRLDEAQASRQLNICCQH</sequence>
<proteinExistence type="inferred from homology"/>
<reference key="1">
    <citation type="journal article" date="2002" name="Proc. Natl. Acad. Sci. U.S.A.">
        <title>The complete genome sequence of Chlorobium tepidum TLS, a photosynthetic, anaerobic, green-sulfur bacterium.</title>
        <authorList>
            <person name="Eisen J.A."/>
            <person name="Nelson K.E."/>
            <person name="Paulsen I.T."/>
            <person name="Heidelberg J.F."/>
            <person name="Wu M."/>
            <person name="Dodson R.J."/>
            <person name="DeBoy R.T."/>
            <person name="Gwinn M.L."/>
            <person name="Nelson W.C."/>
            <person name="Haft D.H."/>
            <person name="Hickey E.K."/>
            <person name="Peterson J.D."/>
            <person name="Durkin A.S."/>
            <person name="Kolonay J.F."/>
            <person name="Yang F."/>
            <person name="Holt I.E."/>
            <person name="Umayam L.A."/>
            <person name="Mason T.M."/>
            <person name="Brenner M."/>
            <person name="Shea T.P."/>
            <person name="Parksey D.S."/>
            <person name="Nierman W.C."/>
            <person name="Feldblyum T.V."/>
            <person name="Hansen C.L."/>
            <person name="Craven M.B."/>
            <person name="Radune D."/>
            <person name="Vamathevan J.J."/>
            <person name="Khouri H.M."/>
            <person name="White O."/>
            <person name="Gruber T.M."/>
            <person name="Ketchum K.A."/>
            <person name="Venter J.C."/>
            <person name="Tettelin H."/>
            <person name="Bryant D.A."/>
            <person name="Fraser C.M."/>
        </authorList>
    </citation>
    <scope>NUCLEOTIDE SEQUENCE [LARGE SCALE GENOMIC DNA]</scope>
    <source>
        <strain>ATCC 49652 / DSM 12025 / NBRC 103806 / TLS</strain>
    </source>
</reference>